<sequence length="141" mass="15865">MALERTFSIVKPDAVERNLIGEIYNRIEKAGLRIIAAKMVHLTEEQASGFYAEHEGKEFFQPLKEFMTSGPIMVQVLEGENAIARYRELMGKTNPEEAAAGTLRADYALSMRHNSVHGSDSPESAAREIEFFFPESEICPR</sequence>
<organism>
    <name type="scientific">Vibrio parahaemolyticus serotype O3:K6 (strain RIMD 2210633)</name>
    <dbReference type="NCBI Taxonomy" id="223926"/>
    <lineage>
        <taxon>Bacteria</taxon>
        <taxon>Pseudomonadati</taxon>
        <taxon>Pseudomonadota</taxon>
        <taxon>Gammaproteobacteria</taxon>
        <taxon>Vibrionales</taxon>
        <taxon>Vibrionaceae</taxon>
        <taxon>Vibrio</taxon>
    </lineage>
</organism>
<gene>
    <name evidence="1" type="primary">ndk</name>
    <name type="ordered locus">VP0604</name>
</gene>
<keyword id="KW-0067">ATP-binding</keyword>
<keyword id="KW-0963">Cytoplasm</keyword>
<keyword id="KW-0418">Kinase</keyword>
<keyword id="KW-0460">Magnesium</keyword>
<keyword id="KW-0479">Metal-binding</keyword>
<keyword id="KW-0546">Nucleotide metabolism</keyword>
<keyword id="KW-0547">Nucleotide-binding</keyword>
<keyword id="KW-0597">Phosphoprotein</keyword>
<keyword id="KW-0808">Transferase</keyword>
<proteinExistence type="inferred from homology"/>
<name>NDK_VIBPA</name>
<feature type="chain" id="PRO_0000137072" description="Nucleoside diphosphate kinase">
    <location>
        <begin position="1"/>
        <end position="141"/>
    </location>
</feature>
<feature type="active site" description="Pros-phosphohistidine intermediate" evidence="1">
    <location>
        <position position="117"/>
    </location>
</feature>
<feature type="binding site" evidence="1">
    <location>
        <position position="11"/>
    </location>
    <ligand>
        <name>ATP</name>
        <dbReference type="ChEBI" id="CHEBI:30616"/>
    </ligand>
</feature>
<feature type="binding site" evidence="1">
    <location>
        <position position="59"/>
    </location>
    <ligand>
        <name>ATP</name>
        <dbReference type="ChEBI" id="CHEBI:30616"/>
    </ligand>
</feature>
<feature type="binding site" evidence="1">
    <location>
        <position position="87"/>
    </location>
    <ligand>
        <name>ATP</name>
        <dbReference type="ChEBI" id="CHEBI:30616"/>
    </ligand>
</feature>
<feature type="binding site" evidence="1">
    <location>
        <position position="93"/>
    </location>
    <ligand>
        <name>ATP</name>
        <dbReference type="ChEBI" id="CHEBI:30616"/>
    </ligand>
</feature>
<feature type="binding site" evidence="1">
    <location>
        <position position="104"/>
    </location>
    <ligand>
        <name>ATP</name>
        <dbReference type="ChEBI" id="CHEBI:30616"/>
    </ligand>
</feature>
<feature type="binding site" evidence="1">
    <location>
        <position position="114"/>
    </location>
    <ligand>
        <name>ATP</name>
        <dbReference type="ChEBI" id="CHEBI:30616"/>
    </ligand>
</feature>
<protein>
    <recommendedName>
        <fullName evidence="1">Nucleoside diphosphate kinase</fullName>
        <shortName evidence="1">NDK</shortName>
        <shortName evidence="1">NDP kinase</shortName>
        <ecNumber evidence="1">2.7.4.6</ecNumber>
    </recommendedName>
    <alternativeName>
        <fullName evidence="1">Nucleoside-2-P kinase</fullName>
    </alternativeName>
</protein>
<accession>Q87S20</accession>
<evidence type="ECO:0000255" key="1">
    <source>
        <dbReference type="HAMAP-Rule" id="MF_00451"/>
    </source>
</evidence>
<reference key="1">
    <citation type="journal article" date="2003" name="Lancet">
        <title>Genome sequence of Vibrio parahaemolyticus: a pathogenic mechanism distinct from that of V. cholerae.</title>
        <authorList>
            <person name="Makino K."/>
            <person name="Oshima K."/>
            <person name="Kurokawa K."/>
            <person name="Yokoyama K."/>
            <person name="Uda T."/>
            <person name="Tagomori K."/>
            <person name="Iijima Y."/>
            <person name="Najima M."/>
            <person name="Nakano M."/>
            <person name="Yamashita A."/>
            <person name="Kubota Y."/>
            <person name="Kimura S."/>
            <person name="Yasunaga T."/>
            <person name="Honda T."/>
            <person name="Shinagawa H."/>
            <person name="Hattori M."/>
            <person name="Iida T."/>
        </authorList>
    </citation>
    <scope>NUCLEOTIDE SEQUENCE [LARGE SCALE GENOMIC DNA]</scope>
    <source>
        <strain>RIMD 2210633</strain>
    </source>
</reference>
<dbReference type="EC" id="2.7.4.6" evidence="1"/>
<dbReference type="EMBL" id="BA000031">
    <property type="protein sequence ID" value="BAC58867.1"/>
    <property type="molecule type" value="Genomic_DNA"/>
</dbReference>
<dbReference type="RefSeq" id="NP_796983.1">
    <property type="nucleotide sequence ID" value="NC_004603.1"/>
</dbReference>
<dbReference type="RefSeq" id="WP_005460254.1">
    <property type="nucleotide sequence ID" value="NC_004603.1"/>
</dbReference>
<dbReference type="SMR" id="Q87S20"/>
<dbReference type="GeneID" id="1188079"/>
<dbReference type="KEGG" id="vpa:VP0604"/>
<dbReference type="PATRIC" id="fig|223926.6.peg.573"/>
<dbReference type="eggNOG" id="COG0105">
    <property type="taxonomic scope" value="Bacteria"/>
</dbReference>
<dbReference type="HOGENOM" id="CLU_060216_8_1_6"/>
<dbReference type="Proteomes" id="UP000002493">
    <property type="component" value="Chromosome 1"/>
</dbReference>
<dbReference type="GO" id="GO:0005737">
    <property type="term" value="C:cytoplasm"/>
    <property type="evidence" value="ECO:0007669"/>
    <property type="project" value="UniProtKB-SubCell"/>
</dbReference>
<dbReference type="GO" id="GO:0005524">
    <property type="term" value="F:ATP binding"/>
    <property type="evidence" value="ECO:0007669"/>
    <property type="project" value="UniProtKB-UniRule"/>
</dbReference>
<dbReference type="GO" id="GO:0046872">
    <property type="term" value="F:metal ion binding"/>
    <property type="evidence" value="ECO:0007669"/>
    <property type="project" value="UniProtKB-KW"/>
</dbReference>
<dbReference type="GO" id="GO:0004550">
    <property type="term" value="F:nucleoside diphosphate kinase activity"/>
    <property type="evidence" value="ECO:0007669"/>
    <property type="project" value="UniProtKB-UniRule"/>
</dbReference>
<dbReference type="GO" id="GO:0006241">
    <property type="term" value="P:CTP biosynthetic process"/>
    <property type="evidence" value="ECO:0007669"/>
    <property type="project" value="UniProtKB-UniRule"/>
</dbReference>
<dbReference type="GO" id="GO:0006183">
    <property type="term" value="P:GTP biosynthetic process"/>
    <property type="evidence" value="ECO:0007669"/>
    <property type="project" value="UniProtKB-UniRule"/>
</dbReference>
<dbReference type="GO" id="GO:0006228">
    <property type="term" value="P:UTP biosynthetic process"/>
    <property type="evidence" value="ECO:0007669"/>
    <property type="project" value="UniProtKB-UniRule"/>
</dbReference>
<dbReference type="CDD" id="cd04413">
    <property type="entry name" value="NDPk_I"/>
    <property type="match status" value="1"/>
</dbReference>
<dbReference type="FunFam" id="3.30.70.141:FF:000001">
    <property type="entry name" value="Nucleoside diphosphate kinase"/>
    <property type="match status" value="1"/>
</dbReference>
<dbReference type="Gene3D" id="3.30.70.141">
    <property type="entry name" value="Nucleoside diphosphate kinase-like domain"/>
    <property type="match status" value="1"/>
</dbReference>
<dbReference type="HAMAP" id="MF_00451">
    <property type="entry name" value="NDP_kinase"/>
    <property type="match status" value="1"/>
</dbReference>
<dbReference type="InterPro" id="IPR034907">
    <property type="entry name" value="NDK-like_dom"/>
</dbReference>
<dbReference type="InterPro" id="IPR036850">
    <property type="entry name" value="NDK-like_dom_sf"/>
</dbReference>
<dbReference type="InterPro" id="IPR001564">
    <property type="entry name" value="Nucleoside_diP_kinase"/>
</dbReference>
<dbReference type="InterPro" id="IPR023005">
    <property type="entry name" value="Nucleoside_diP_kinase_AS"/>
</dbReference>
<dbReference type="NCBIfam" id="NF001908">
    <property type="entry name" value="PRK00668.1"/>
    <property type="match status" value="1"/>
</dbReference>
<dbReference type="PANTHER" id="PTHR46161">
    <property type="entry name" value="NUCLEOSIDE DIPHOSPHATE KINASE"/>
    <property type="match status" value="1"/>
</dbReference>
<dbReference type="PANTHER" id="PTHR46161:SF3">
    <property type="entry name" value="NUCLEOSIDE DIPHOSPHATE KINASE DDB_G0292928-RELATED"/>
    <property type="match status" value="1"/>
</dbReference>
<dbReference type="Pfam" id="PF00334">
    <property type="entry name" value="NDK"/>
    <property type="match status" value="1"/>
</dbReference>
<dbReference type="PRINTS" id="PR01243">
    <property type="entry name" value="NUCDPKINASE"/>
</dbReference>
<dbReference type="SMART" id="SM00562">
    <property type="entry name" value="NDK"/>
    <property type="match status" value="1"/>
</dbReference>
<dbReference type="SUPFAM" id="SSF54919">
    <property type="entry name" value="Nucleoside diphosphate kinase, NDK"/>
    <property type="match status" value="1"/>
</dbReference>
<dbReference type="PROSITE" id="PS00469">
    <property type="entry name" value="NDPK"/>
    <property type="match status" value="1"/>
</dbReference>
<dbReference type="PROSITE" id="PS51374">
    <property type="entry name" value="NDPK_LIKE"/>
    <property type="match status" value="1"/>
</dbReference>
<comment type="function">
    <text evidence="1">Major role in the synthesis of nucleoside triphosphates other than ATP. The ATP gamma phosphate is transferred to the NDP beta phosphate via a ping-pong mechanism, using a phosphorylated active-site intermediate.</text>
</comment>
<comment type="catalytic activity">
    <reaction evidence="1">
        <text>a 2'-deoxyribonucleoside 5'-diphosphate + ATP = a 2'-deoxyribonucleoside 5'-triphosphate + ADP</text>
        <dbReference type="Rhea" id="RHEA:44640"/>
        <dbReference type="ChEBI" id="CHEBI:30616"/>
        <dbReference type="ChEBI" id="CHEBI:61560"/>
        <dbReference type="ChEBI" id="CHEBI:73316"/>
        <dbReference type="ChEBI" id="CHEBI:456216"/>
        <dbReference type="EC" id="2.7.4.6"/>
    </reaction>
</comment>
<comment type="catalytic activity">
    <reaction evidence="1">
        <text>a ribonucleoside 5'-diphosphate + ATP = a ribonucleoside 5'-triphosphate + ADP</text>
        <dbReference type="Rhea" id="RHEA:18113"/>
        <dbReference type="ChEBI" id="CHEBI:30616"/>
        <dbReference type="ChEBI" id="CHEBI:57930"/>
        <dbReference type="ChEBI" id="CHEBI:61557"/>
        <dbReference type="ChEBI" id="CHEBI:456216"/>
        <dbReference type="EC" id="2.7.4.6"/>
    </reaction>
</comment>
<comment type="cofactor">
    <cofactor evidence="1">
        <name>Mg(2+)</name>
        <dbReference type="ChEBI" id="CHEBI:18420"/>
    </cofactor>
</comment>
<comment type="subunit">
    <text evidence="1">Homotetramer.</text>
</comment>
<comment type="subcellular location">
    <subcellularLocation>
        <location evidence="1">Cytoplasm</location>
    </subcellularLocation>
</comment>
<comment type="similarity">
    <text evidence="1">Belongs to the NDK family.</text>
</comment>